<organism>
    <name type="scientific">Vespa tropica</name>
    <name type="common">Greater banded hornet</name>
    <name type="synonym">Sphex tropica</name>
    <dbReference type="NCBI Taxonomy" id="7450"/>
    <lineage>
        <taxon>Eukaryota</taxon>
        <taxon>Metazoa</taxon>
        <taxon>Ecdysozoa</taxon>
        <taxon>Arthropoda</taxon>
        <taxon>Hexapoda</taxon>
        <taxon>Insecta</taxon>
        <taxon>Pterygota</taxon>
        <taxon>Neoptera</taxon>
        <taxon>Endopterygota</taxon>
        <taxon>Hymenoptera</taxon>
        <taxon>Apocrita</taxon>
        <taxon>Aculeata</taxon>
        <taxon>Vespoidea</taxon>
        <taxon>Vespidae</taxon>
        <taxon>Vespinae</taxon>
        <taxon>Vespa</taxon>
    </lineage>
</organism>
<protein>
    <recommendedName>
        <fullName evidence="3">Mastoparan-VT3</fullName>
    </recommendedName>
</protein>
<sequence>MKNTILILFTAFIALLGFFGMSAEALADPKADPLAGPNPDADPEAINLKAITALAKKLLG</sequence>
<evidence type="ECO:0000255" key="1"/>
<evidence type="ECO:0000269" key="2">
    <source>
    </source>
</evidence>
<evidence type="ECO:0000303" key="3">
    <source>
    </source>
</evidence>
<evidence type="ECO:0000305" key="4"/>
<evidence type="ECO:0000305" key="5">
    <source>
    </source>
</evidence>
<accession>P0DQZ5</accession>
<comment type="function">
    <text evidence="2">The synthetic peptide shows antimicrobial activities against Gram-negative bacteria (but not against all strains tested), Gram-positive bacteria (all strains tested) and the fungi C.albicans and C.parapsilosis. Exhibits moderate hemolytic activity (25% at 100 ug/ml) against washed human erythrocytes.</text>
</comment>
<comment type="subcellular location">
    <subcellularLocation>
        <location evidence="5">Secreted</location>
    </subcellularLocation>
</comment>
<comment type="tissue specificity">
    <text evidence="5">Expressed by the venom gland.</text>
</comment>
<comment type="similarity">
    <text evidence="4">Belongs to the MCD family. Mastoparan subfamily.</text>
</comment>
<dbReference type="GO" id="GO:0005576">
    <property type="term" value="C:extracellular region"/>
    <property type="evidence" value="ECO:0007669"/>
    <property type="project" value="UniProtKB-SubCell"/>
</dbReference>
<dbReference type="GO" id="GO:0042742">
    <property type="term" value="P:defense response to bacterium"/>
    <property type="evidence" value="ECO:0007669"/>
    <property type="project" value="UniProtKB-KW"/>
</dbReference>
<dbReference type="GO" id="GO:0050832">
    <property type="term" value="P:defense response to fungus"/>
    <property type="evidence" value="ECO:0007669"/>
    <property type="project" value="UniProtKB-KW"/>
</dbReference>
<dbReference type="GO" id="GO:0045087">
    <property type="term" value="P:innate immune response"/>
    <property type="evidence" value="ECO:0007669"/>
    <property type="project" value="UniProtKB-KW"/>
</dbReference>
<dbReference type="GO" id="GO:0031640">
    <property type="term" value="P:killing of cells of another organism"/>
    <property type="evidence" value="ECO:0007669"/>
    <property type="project" value="UniProtKB-KW"/>
</dbReference>
<name>MAST3_VESTR</name>
<reference key="1">
    <citation type="journal article" date="2013" name="Toxicon">
        <title>Antimicrobial peptides from the venom gland of the social wasp Vespa tropica.</title>
        <authorList>
            <person name="Yang X."/>
            <person name="Wang Y."/>
            <person name="Lee W.H."/>
            <person name="Zhang Y."/>
        </authorList>
    </citation>
    <scope>NUCLEOTIDE SEQUENCE [MRNA]</scope>
    <scope>FUNCTION</scope>
    <scope>PROBABLE AMIDATION AT LEU-59</scope>
    <scope>SYNTHESIS OF 46-59</scope>
    <source>
        <tissue>Venom gland</tissue>
    </source>
</reference>
<proteinExistence type="evidence at protein level"/>
<keyword id="KW-0027">Amidation</keyword>
<keyword id="KW-0044">Antibiotic</keyword>
<keyword id="KW-0929">Antimicrobial</keyword>
<keyword id="KW-0295">Fungicide</keyword>
<keyword id="KW-0391">Immunity</keyword>
<keyword id="KW-0399">Innate immunity</keyword>
<keyword id="KW-0677">Repeat</keyword>
<keyword id="KW-0964">Secreted</keyword>
<keyword id="KW-0732">Signal</keyword>
<feature type="signal peptide" evidence="1">
    <location>
        <begin position="1"/>
        <end position="27"/>
    </location>
</feature>
<feature type="propeptide" id="PRO_0000458787" evidence="5">
    <location>
        <begin position="28"/>
        <end position="45"/>
    </location>
</feature>
<feature type="peptide" id="PRO_0000458788" description="Mastoparan-VT3" evidence="2">
    <location>
        <begin position="46"/>
        <end position="59"/>
    </location>
</feature>
<feature type="repeat" description="AXPX 1" evidence="4">
    <location>
        <begin position="27"/>
        <end position="30"/>
    </location>
</feature>
<feature type="repeat" description="AXPX 2" evidence="4">
    <location>
        <begin position="31"/>
        <end position="34"/>
    </location>
</feature>
<feature type="repeat" description="AXPX 3" evidence="4">
    <location>
        <begin position="35"/>
        <end position="38"/>
    </location>
</feature>
<feature type="repeat" description="AXPX 4" evidence="4">
    <location>
        <begin position="41"/>
        <end position="44"/>
    </location>
</feature>
<feature type="modified residue" description="Leucine amide" evidence="2">
    <location>
        <position position="59"/>
    </location>
</feature>